<name>RDGC_SALTI</name>
<comment type="function">
    <text evidence="1">May be involved in recombination.</text>
</comment>
<comment type="subcellular location">
    <subcellularLocation>
        <location evidence="1">Cytoplasm</location>
        <location evidence="1">Nucleoid</location>
    </subcellularLocation>
</comment>
<comment type="similarity">
    <text evidence="1">Belongs to the RdgC family.</text>
</comment>
<comment type="sequence caution" evidence="2">
    <conflict type="erroneous initiation">
        <sequence resource="EMBL-CDS" id="AAO70061"/>
    </conflict>
</comment>
<comment type="sequence caution" evidence="2">
    <conflict type="erroneous initiation">
        <sequence resource="EMBL-CDS" id="CAD08847"/>
    </conflict>
</comment>
<gene>
    <name evidence="1" type="primary">rdgC</name>
    <name type="ordered locus">STY0425</name>
    <name type="ordered locus">t2472</name>
</gene>
<keyword id="KW-0963">Cytoplasm</keyword>
<keyword id="KW-0233">DNA recombination</keyword>
<proteinExistence type="inferred from homology"/>
<evidence type="ECO:0000255" key="1">
    <source>
        <dbReference type="HAMAP-Rule" id="MF_00194"/>
    </source>
</evidence>
<evidence type="ECO:0000305" key="2"/>
<dbReference type="EMBL" id="AL513382">
    <property type="protein sequence ID" value="CAD08847.1"/>
    <property type="status" value="ALT_INIT"/>
    <property type="molecule type" value="Genomic_DNA"/>
</dbReference>
<dbReference type="EMBL" id="AE014613">
    <property type="protein sequence ID" value="AAO70061.1"/>
    <property type="status" value="ALT_INIT"/>
    <property type="molecule type" value="Genomic_DNA"/>
</dbReference>
<dbReference type="PIR" id="AG0550">
    <property type="entry name" value="AG0550"/>
</dbReference>
<dbReference type="RefSeq" id="NP_454987.3">
    <property type="nucleotide sequence ID" value="NC_003198.1"/>
</dbReference>
<dbReference type="RefSeq" id="WP_000964305.1">
    <property type="nucleotide sequence ID" value="NZ_WSUR01000017.1"/>
</dbReference>
<dbReference type="SMR" id="P65974"/>
<dbReference type="STRING" id="220341.gene:17584452"/>
<dbReference type="KEGG" id="stt:t2472"/>
<dbReference type="KEGG" id="sty:STY0425"/>
<dbReference type="PATRIC" id="fig|220341.7.peg.423"/>
<dbReference type="eggNOG" id="COG2974">
    <property type="taxonomic scope" value="Bacteria"/>
</dbReference>
<dbReference type="HOGENOM" id="CLU_052038_1_1_6"/>
<dbReference type="OMA" id="TGWVPPM"/>
<dbReference type="OrthoDB" id="5290530at2"/>
<dbReference type="Proteomes" id="UP000000541">
    <property type="component" value="Chromosome"/>
</dbReference>
<dbReference type="Proteomes" id="UP000002670">
    <property type="component" value="Chromosome"/>
</dbReference>
<dbReference type="GO" id="GO:0043590">
    <property type="term" value="C:bacterial nucleoid"/>
    <property type="evidence" value="ECO:0007669"/>
    <property type="project" value="TreeGrafter"/>
</dbReference>
<dbReference type="GO" id="GO:0005737">
    <property type="term" value="C:cytoplasm"/>
    <property type="evidence" value="ECO:0007669"/>
    <property type="project" value="UniProtKB-UniRule"/>
</dbReference>
<dbReference type="GO" id="GO:0003690">
    <property type="term" value="F:double-stranded DNA binding"/>
    <property type="evidence" value="ECO:0007669"/>
    <property type="project" value="TreeGrafter"/>
</dbReference>
<dbReference type="GO" id="GO:0006310">
    <property type="term" value="P:DNA recombination"/>
    <property type="evidence" value="ECO:0007669"/>
    <property type="project" value="UniProtKB-UniRule"/>
</dbReference>
<dbReference type="GO" id="GO:0000018">
    <property type="term" value="P:regulation of DNA recombination"/>
    <property type="evidence" value="ECO:0007669"/>
    <property type="project" value="TreeGrafter"/>
</dbReference>
<dbReference type="HAMAP" id="MF_00194">
    <property type="entry name" value="RdgC"/>
    <property type="match status" value="1"/>
</dbReference>
<dbReference type="InterPro" id="IPR007476">
    <property type="entry name" value="RdgC"/>
</dbReference>
<dbReference type="NCBIfam" id="NF001460">
    <property type="entry name" value="PRK00321.1-1"/>
    <property type="match status" value="1"/>
</dbReference>
<dbReference type="NCBIfam" id="NF001462">
    <property type="entry name" value="PRK00321.1-3"/>
    <property type="match status" value="1"/>
</dbReference>
<dbReference type="NCBIfam" id="NF001464">
    <property type="entry name" value="PRK00321.1-5"/>
    <property type="match status" value="1"/>
</dbReference>
<dbReference type="PANTHER" id="PTHR38103">
    <property type="entry name" value="RECOMBINATION-ASSOCIATED PROTEIN RDGC"/>
    <property type="match status" value="1"/>
</dbReference>
<dbReference type="PANTHER" id="PTHR38103:SF1">
    <property type="entry name" value="RECOMBINATION-ASSOCIATED PROTEIN RDGC"/>
    <property type="match status" value="1"/>
</dbReference>
<dbReference type="Pfam" id="PF04381">
    <property type="entry name" value="RdgC"/>
    <property type="match status" value="1"/>
</dbReference>
<reference key="1">
    <citation type="journal article" date="2001" name="Nature">
        <title>Complete genome sequence of a multiple drug resistant Salmonella enterica serovar Typhi CT18.</title>
        <authorList>
            <person name="Parkhill J."/>
            <person name="Dougan G."/>
            <person name="James K.D."/>
            <person name="Thomson N.R."/>
            <person name="Pickard D."/>
            <person name="Wain J."/>
            <person name="Churcher C.M."/>
            <person name="Mungall K.L."/>
            <person name="Bentley S.D."/>
            <person name="Holden M.T.G."/>
            <person name="Sebaihia M."/>
            <person name="Baker S."/>
            <person name="Basham D."/>
            <person name="Brooks K."/>
            <person name="Chillingworth T."/>
            <person name="Connerton P."/>
            <person name="Cronin A."/>
            <person name="Davis P."/>
            <person name="Davies R.M."/>
            <person name="Dowd L."/>
            <person name="White N."/>
            <person name="Farrar J."/>
            <person name="Feltwell T."/>
            <person name="Hamlin N."/>
            <person name="Haque A."/>
            <person name="Hien T.T."/>
            <person name="Holroyd S."/>
            <person name="Jagels K."/>
            <person name="Krogh A."/>
            <person name="Larsen T.S."/>
            <person name="Leather S."/>
            <person name="Moule S."/>
            <person name="O'Gaora P."/>
            <person name="Parry C."/>
            <person name="Quail M.A."/>
            <person name="Rutherford K.M."/>
            <person name="Simmonds M."/>
            <person name="Skelton J."/>
            <person name="Stevens K."/>
            <person name="Whitehead S."/>
            <person name="Barrell B.G."/>
        </authorList>
    </citation>
    <scope>NUCLEOTIDE SEQUENCE [LARGE SCALE GENOMIC DNA]</scope>
    <source>
        <strain>CT18</strain>
    </source>
</reference>
<reference key="2">
    <citation type="journal article" date="2003" name="J. Bacteriol.">
        <title>Comparative genomics of Salmonella enterica serovar Typhi strains Ty2 and CT18.</title>
        <authorList>
            <person name="Deng W."/>
            <person name="Liou S.-R."/>
            <person name="Plunkett G. III"/>
            <person name="Mayhew G.F."/>
            <person name="Rose D.J."/>
            <person name="Burland V."/>
            <person name="Kodoyianni V."/>
            <person name="Schwartz D.C."/>
            <person name="Blattner F.R."/>
        </authorList>
    </citation>
    <scope>NUCLEOTIDE SEQUENCE [LARGE SCALE GENOMIC DNA]</scope>
    <source>
        <strain>ATCC 700931 / Ty2</strain>
    </source>
</reference>
<protein>
    <recommendedName>
        <fullName evidence="1">Recombination-associated protein RdgC</fullName>
    </recommendedName>
</protein>
<accession>P65974</accession>
<accession>Q8Z8Y8</accession>
<accession>Q8ZRE6</accession>
<organism>
    <name type="scientific">Salmonella typhi</name>
    <dbReference type="NCBI Taxonomy" id="90370"/>
    <lineage>
        <taxon>Bacteria</taxon>
        <taxon>Pseudomonadati</taxon>
        <taxon>Pseudomonadota</taxon>
        <taxon>Gammaproteobacteria</taxon>
        <taxon>Enterobacterales</taxon>
        <taxon>Enterobacteriaceae</taxon>
        <taxon>Salmonella</taxon>
    </lineage>
</organism>
<feature type="chain" id="PRO_0000211750" description="Recombination-associated protein RdgC">
    <location>
        <begin position="1"/>
        <end position="303"/>
    </location>
</feature>
<sequence>MLWFKNLMVYRLSRDITLRAEEMEKQLASMTFTPCGSQDMAKMGWVPPMGSHSDALTHTANGQIIICARKEEKILPSPVIKQALEAKIQKLEADQGRKLKKTEKDSLKDEVLHSLLPRAFSRFSQTMMWIDTVNGLIMVDCASAKKAEDTLALLRKSLGSLPVVPLALENPIELTLTEWVRSGTVAQGFQLLDEAELKAMLEDGGVIRAKKQDLVSDEIAVHIEAGKVVTKLALDWQQRIQFVMCDDGSIKRLKFCDELRDQNEDIDREDFAQRFDADFILMTGELAALIQSLVEGLGGEAQR</sequence>